<feature type="chain" id="PRO_1000062630" description="Acetyl-coenzyme A carboxylase carboxyl transferase subunit alpha">
    <location>
        <begin position="1"/>
        <end position="313"/>
    </location>
</feature>
<feature type="domain" description="CoA carboxyltransferase C-terminal" evidence="2">
    <location>
        <begin position="36"/>
        <end position="286"/>
    </location>
</feature>
<proteinExistence type="inferred from homology"/>
<sequence>MAIYLDFENHIKEIQNEIELALIRGDEDAKEILEKRLDKEVKTIYSNLTDFQKLQLARHPDRPYAMDYIDLILKDKYEVFGDRHYNDDKAIVCFIGKIDNIPVVVIGEEKGRGTKNKLLRNFGMPNPCGYRKALKMAKFAEKFNLPILMLVDTAGAYPGIGAEERGQSEAIAKNLQEFASLKVPTISIIIGEGGSGGALAIAVADKLAMMEYSIFSVISPEGCAAILWDDPSKTEVAIKAMKITPRDLKEAGLIDDIILEPSKGAHRNKISAANTIKEYFLDTLRTIQQDPHFLDNRYKKLMSLGSFVESMPH</sequence>
<evidence type="ECO:0000255" key="1">
    <source>
        <dbReference type="HAMAP-Rule" id="MF_00823"/>
    </source>
</evidence>
<evidence type="ECO:0000255" key="2">
    <source>
        <dbReference type="PROSITE-ProRule" id="PRU01137"/>
    </source>
</evidence>
<comment type="function">
    <text evidence="1">Component of the acetyl coenzyme A carboxylase (ACC) complex. First, biotin carboxylase catalyzes the carboxylation of biotin on its carrier protein (BCCP) and then the CO(2) group is transferred by the carboxyltransferase to acetyl-CoA to form malonyl-CoA.</text>
</comment>
<comment type="catalytic activity">
    <reaction evidence="1">
        <text>N(6)-carboxybiotinyl-L-lysyl-[protein] + acetyl-CoA = N(6)-biotinyl-L-lysyl-[protein] + malonyl-CoA</text>
        <dbReference type="Rhea" id="RHEA:54728"/>
        <dbReference type="Rhea" id="RHEA-COMP:10505"/>
        <dbReference type="Rhea" id="RHEA-COMP:10506"/>
        <dbReference type="ChEBI" id="CHEBI:57288"/>
        <dbReference type="ChEBI" id="CHEBI:57384"/>
        <dbReference type="ChEBI" id="CHEBI:83144"/>
        <dbReference type="ChEBI" id="CHEBI:83145"/>
        <dbReference type="EC" id="2.1.3.15"/>
    </reaction>
</comment>
<comment type="pathway">
    <text evidence="1">Lipid metabolism; malonyl-CoA biosynthesis; malonyl-CoA from acetyl-CoA: step 1/1.</text>
</comment>
<comment type="subunit">
    <text evidence="1">Acetyl-CoA carboxylase is a heterohexamer composed of biotin carboxyl carrier protein (AccB), biotin carboxylase (AccC) and two subunits each of ACCase subunit alpha (AccA) and ACCase subunit beta (AccD).</text>
</comment>
<comment type="subcellular location">
    <subcellularLocation>
        <location evidence="1">Cytoplasm</location>
    </subcellularLocation>
</comment>
<comment type="similarity">
    <text evidence="1">Belongs to the AccA family.</text>
</comment>
<organism>
    <name type="scientific">Helicobacter acinonychis (strain Sheeba)</name>
    <dbReference type="NCBI Taxonomy" id="382638"/>
    <lineage>
        <taxon>Bacteria</taxon>
        <taxon>Pseudomonadati</taxon>
        <taxon>Campylobacterota</taxon>
        <taxon>Epsilonproteobacteria</taxon>
        <taxon>Campylobacterales</taxon>
        <taxon>Helicobacteraceae</taxon>
        <taxon>Helicobacter</taxon>
    </lineage>
</organism>
<name>ACCA_HELAH</name>
<gene>
    <name evidence="1" type="primary">accA</name>
    <name type="ordered locus">Hac_0778</name>
</gene>
<protein>
    <recommendedName>
        <fullName evidence="1">Acetyl-coenzyme A carboxylase carboxyl transferase subunit alpha</fullName>
        <shortName evidence="1">ACCase subunit alpha</shortName>
        <shortName evidence="1">Acetyl-CoA carboxylase carboxyltransferase subunit alpha</shortName>
        <ecNumber evidence="1">2.1.3.15</ecNumber>
    </recommendedName>
</protein>
<keyword id="KW-0067">ATP-binding</keyword>
<keyword id="KW-0963">Cytoplasm</keyword>
<keyword id="KW-0275">Fatty acid biosynthesis</keyword>
<keyword id="KW-0276">Fatty acid metabolism</keyword>
<keyword id="KW-0444">Lipid biosynthesis</keyword>
<keyword id="KW-0443">Lipid metabolism</keyword>
<keyword id="KW-0547">Nucleotide-binding</keyword>
<keyword id="KW-0808">Transferase</keyword>
<reference key="1">
    <citation type="journal article" date="2006" name="PLoS Genet.">
        <title>Who ate whom? Adaptive Helicobacter genomic changes that accompanied a host jump from early humans to large felines.</title>
        <authorList>
            <person name="Eppinger M."/>
            <person name="Baar C."/>
            <person name="Linz B."/>
            <person name="Raddatz G."/>
            <person name="Lanz C."/>
            <person name="Keller H."/>
            <person name="Morelli G."/>
            <person name="Gressmann H."/>
            <person name="Achtman M."/>
            <person name="Schuster S.C."/>
        </authorList>
    </citation>
    <scope>NUCLEOTIDE SEQUENCE [LARGE SCALE GENOMIC DNA]</scope>
    <source>
        <strain>Sheeba</strain>
    </source>
</reference>
<accession>Q17XQ8</accession>
<dbReference type="EC" id="2.1.3.15" evidence="1"/>
<dbReference type="EMBL" id="AM260522">
    <property type="protein sequence ID" value="CAJ99568.1"/>
    <property type="molecule type" value="Genomic_DNA"/>
</dbReference>
<dbReference type="RefSeq" id="WP_011577681.1">
    <property type="nucleotide sequence ID" value="NC_008229.1"/>
</dbReference>
<dbReference type="SMR" id="Q17XQ8"/>
<dbReference type="STRING" id="382638.Hac_0778"/>
<dbReference type="GeneID" id="31758204"/>
<dbReference type="KEGG" id="hac:Hac_0778"/>
<dbReference type="eggNOG" id="COG0825">
    <property type="taxonomic scope" value="Bacteria"/>
</dbReference>
<dbReference type="HOGENOM" id="CLU_015486_0_2_7"/>
<dbReference type="OrthoDB" id="9808023at2"/>
<dbReference type="BioCyc" id="HACI382638:HAC_RS03360-MONOMER"/>
<dbReference type="UniPathway" id="UPA00655">
    <property type="reaction ID" value="UER00711"/>
</dbReference>
<dbReference type="Proteomes" id="UP000000775">
    <property type="component" value="Chromosome"/>
</dbReference>
<dbReference type="GO" id="GO:0009317">
    <property type="term" value="C:acetyl-CoA carboxylase complex"/>
    <property type="evidence" value="ECO:0007669"/>
    <property type="project" value="InterPro"/>
</dbReference>
<dbReference type="GO" id="GO:0003989">
    <property type="term" value="F:acetyl-CoA carboxylase activity"/>
    <property type="evidence" value="ECO:0007669"/>
    <property type="project" value="InterPro"/>
</dbReference>
<dbReference type="GO" id="GO:0005524">
    <property type="term" value="F:ATP binding"/>
    <property type="evidence" value="ECO:0007669"/>
    <property type="project" value="UniProtKB-KW"/>
</dbReference>
<dbReference type="GO" id="GO:0016743">
    <property type="term" value="F:carboxyl- or carbamoyltransferase activity"/>
    <property type="evidence" value="ECO:0007669"/>
    <property type="project" value="UniProtKB-UniRule"/>
</dbReference>
<dbReference type="GO" id="GO:0006633">
    <property type="term" value="P:fatty acid biosynthetic process"/>
    <property type="evidence" value="ECO:0007669"/>
    <property type="project" value="UniProtKB-KW"/>
</dbReference>
<dbReference type="GO" id="GO:2001295">
    <property type="term" value="P:malonyl-CoA biosynthetic process"/>
    <property type="evidence" value="ECO:0007669"/>
    <property type="project" value="UniProtKB-UniRule"/>
</dbReference>
<dbReference type="Gene3D" id="3.90.226.10">
    <property type="entry name" value="2-enoyl-CoA Hydratase, Chain A, domain 1"/>
    <property type="match status" value="1"/>
</dbReference>
<dbReference type="HAMAP" id="MF_00823">
    <property type="entry name" value="AcetylCoA_CT_alpha"/>
    <property type="match status" value="1"/>
</dbReference>
<dbReference type="InterPro" id="IPR001095">
    <property type="entry name" value="Acetyl_CoA_COase_a_su"/>
</dbReference>
<dbReference type="InterPro" id="IPR029045">
    <property type="entry name" value="ClpP/crotonase-like_dom_sf"/>
</dbReference>
<dbReference type="InterPro" id="IPR011763">
    <property type="entry name" value="COA_CT_C"/>
</dbReference>
<dbReference type="NCBIfam" id="TIGR00513">
    <property type="entry name" value="accA"/>
    <property type="match status" value="1"/>
</dbReference>
<dbReference type="NCBIfam" id="NF041504">
    <property type="entry name" value="AccA_sub"/>
    <property type="match status" value="1"/>
</dbReference>
<dbReference type="NCBIfam" id="NF004344">
    <property type="entry name" value="PRK05724.1"/>
    <property type="match status" value="1"/>
</dbReference>
<dbReference type="PANTHER" id="PTHR42853">
    <property type="entry name" value="ACETYL-COENZYME A CARBOXYLASE CARBOXYL TRANSFERASE SUBUNIT ALPHA"/>
    <property type="match status" value="1"/>
</dbReference>
<dbReference type="PANTHER" id="PTHR42853:SF3">
    <property type="entry name" value="ACETYL-COENZYME A CARBOXYLASE CARBOXYL TRANSFERASE SUBUNIT ALPHA, CHLOROPLASTIC"/>
    <property type="match status" value="1"/>
</dbReference>
<dbReference type="Pfam" id="PF03255">
    <property type="entry name" value="ACCA"/>
    <property type="match status" value="1"/>
</dbReference>
<dbReference type="PRINTS" id="PR01069">
    <property type="entry name" value="ACCCTRFRASEA"/>
</dbReference>
<dbReference type="SUPFAM" id="SSF52096">
    <property type="entry name" value="ClpP/crotonase"/>
    <property type="match status" value="1"/>
</dbReference>
<dbReference type="PROSITE" id="PS50989">
    <property type="entry name" value="COA_CT_CTER"/>
    <property type="match status" value="1"/>
</dbReference>